<accession>A5D1F0</accession>
<organism>
    <name type="scientific">Pelotomaculum thermopropionicum (strain DSM 13744 / JCM 10971 / SI)</name>
    <dbReference type="NCBI Taxonomy" id="370438"/>
    <lineage>
        <taxon>Bacteria</taxon>
        <taxon>Bacillati</taxon>
        <taxon>Bacillota</taxon>
        <taxon>Clostridia</taxon>
        <taxon>Eubacteriales</taxon>
        <taxon>Desulfotomaculaceae</taxon>
        <taxon>Pelotomaculum</taxon>
    </lineage>
</organism>
<gene>
    <name evidence="1" type="primary">plsX</name>
    <name type="ordered locus">PTH_1746</name>
</gene>
<name>PLSX_PELTS</name>
<keyword id="KW-0963">Cytoplasm</keyword>
<keyword id="KW-0444">Lipid biosynthesis</keyword>
<keyword id="KW-0443">Lipid metabolism</keyword>
<keyword id="KW-0594">Phospholipid biosynthesis</keyword>
<keyword id="KW-1208">Phospholipid metabolism</keyword>
<keyword id="KW-1185">Reference proteome</keyword>
<keyword id="KW-0808">Transferase</keyword>
<feature type="chain" id="PRO_1000074168" description="Phosphate acyltransferase">
    <location>
        <begin position="1"/>
        <end position="342"/>
    </location>
</feature>
<reference key="1">
    <citation type="journal article" date="2008" name="Genome Res.">
        <title>The genome of Pelotomaculum thermopropionicum reveals niche-associated evolution in anaerobic microbiota.</title>
        <authorList>
            <person name="Kosaka T."/>
            <person name="Kato S."/>
            <person name="Shimoyama T."/>
            <person name="Ishii S."/>
            <person name="Abe T."/>
            <person name="Watanabe K."/>
        </authorList>
    </citation>
    <scope>NUCLEOTIDE SEQUENCE [LARGE SCALE GENOMIC DNA]</scope>
    <source>
        <strain>DSM 13744 / JCM 10971 / SI</strain>
    </source>
</reference>
<protein>
    <recommendedName>
        <fullName evidence="1">Phosphate acyltransferase</fullName>
        <ecNumber evidence="1">2.3.1.274</ecNumber>
    </recommendedName>
    <alternativeName>
        <fullName evidence="1">Acyl-ACP phosphotransacylase</fullName>
    </alternativeName>
    <alternativeName>
        <fullName evidence="1">Acyl-[acyl-carrier-protein]--phosphate acyltransferase</fullName>
    </alternativeName>
    <alternativeName>
        <fullName evidence="1">Phosphate-acyl-ACP acyltransferase</fullName>
    </alternativeName>
</protein>
<sequence length="342" mass="36105">MKIAIDAMGGDYAPREIVKGALLAAEQYRLNIILVGDEEQLRAELGRSNAGGLVNIVHAPEVIEMREHPAVAVRRKKNSSIVKATQLVRDGEASALVSAGSTGAAMAAALFGLGRIKGIDRPAIAGVLPNEKGLTVLLDAGANVDCKPYHLLQFGVMGYLYAKKIFGITCPRVGLLSNGEEETKGNEVTLAAYHLLQKAGINFVGNIEGRDLFNGNVDVAVCDGFVGNVVLKAGEGLAGALFKIMKEEISKSWLAKIGTVMAEPALKGFKSRLDYAEYGGAPLLGVNGISIICHGSSTAKAVKNAIRVARESVENRLLEDIRSSIESIEVKGAGGNLVQEID</sequence>
<dbReference type="EC" id="2.3.1.274" evidence="1"/>
<dbReference type="EMBL" id="AP009389">
    <property type="protein sequence ID" value="BAF59927.1"/>
    <property type="molecule type" value="Genomic_DNA"/>
</dbReference>
<dbReference type="SMR" id="A5D1F0"/>
<dbReference type="STRING" id="370438.PTH_1746"/>
<dbReference type="KEGG" id="pth:PTH_1746"/>
<dbReference type="eggNOG" id="COG0416">
    <property type="taxonomic scope" value="Bacteria"/>
</dbReference>
<dbReference type="HOGENOM" id="CLU_039379_1_1_9"/>
<dbReference type="UniPathway" id="UPA00085"/>
<dbReference type="Proteomes" id="UP000006556">
    <property type="component" value="Chromosome"/>
</dbReference>
<dbReference type="GO" id="GO:0005737">
    <property type="term" value="C:cytoplasm"/>
    <property type="evidence" value="ECO:0007669"/>
    <property type="project" value="UniProtKB-SubCell"/>
</dbReference>
<dbReference type="GO" id="GO:0043811">
    <property type="term" value="F:phosphate:acyl-[acyl carrier protein] acyltransferase activity"/>
    <property type="evidence" value="ECO:0007669"/>
    <property type="project" value="UniProtKB-UniRule"/>
</dbReference>
<dbReference type="GO" id="GO:0006633">
    <property type="term" value="P:fatty acid biosynthetic process"/>
    <property type="evidence" value="ECO:0007669"/>
    <property type="project" value="UniProtKB-UniRule"/>
</dbReference>
<dbReference type="GO" id="GO:0008654">
    <property type="term" value="P:phospholipid biosynthetic process"/>
    <property type="evidence" value="ECO:0007669"/>
    <property type="project" value="UniProtKB-KW"/>
</dbReference>
<dbReference type="Gene3D" id="3.40.718.10">
    <property type="entry name" value="Isopropylmalate Dehydrogenase"/>
    <property type="match status" value="1"/>
</dbReference>
<dbReference type="HAMAP" id="MF_00019">
    <property type="entry name" value="PlsX"/>
    <property type="match status" value="1"/>
</dbReference>
<dbReference type="InterPro" id="IPR003664">
    <property type="entry name" value="FA_synthesis"/>
</dbReference>
<dbReference type="InterPro" id="IPR012281">
    <property type="entry name" value="Phospholipid_synth_PlsX-like"/>
</dbReference>
<dbReference type="NCBIfam" id="TIGR00182">
    <property type="entry name" value="plsX"/>
    <property type="match status" value="1"/>
</dbReference>
<dbReference type="PANTHER" id="PTHR30100">
    <property type="entry name" value="FATTY ACID/PHOSPHOLIPID SYNTHESIS PROTEIN PLSX"/>
    <property type="match status" value="1"/>
</dbReference>
<dbReference type="PANTHER" id="PTHR30100:SF1">
    <property type="entry name" value="PHOSPHATE ACYLTRANSFERASE"/>
    <property type="match status" value="1"/>
</dbReference>
<dbReference type="Pfam" id="PF02504">
    <property type="entry name" value="FA_synthesis"/>
    <property type="match status" value="1"/>
</dbReference>
<dbReference type="PIRSF" id="PIRSF002465">
    <property type="entry name" value="Phsphlp_syn_PlsX"/>
    <property type="match status" value="1"/>
</dbReference>
<dbReference type="SUPFAM" id="SSF53659">
    <property type="entry name" value="Isocitrate/Isopropylmalate dehydrogenase-like"/>
    <property type="match status" value="1"/>
</dbReference>
<proteinExistence type="inferred from homology"/>
<comment type="function">
    <text evidence="1">Catalyzes the reversible formation of acyl-phosphate (acyl-PO(4)) from acyl-[acyl-carrier-protein] (acyl-ACP). This enzyme utilizes acyl-ACP as fatty acyl donor, but not acyl-CoA.</text>
</comment>
<comment type="catalytic activity">
    <reaction evidence="1">
        <text>a fatty acyl-[ACP] + phosphate = an acyl phosphate + holo-[ACP]</text>
        <dbReference type="Rhea" id="RHEA:42292"/>
        <dbReference type="Rhea" id="RHEA-COMP:9685"/>
        <dbReference type="Rhea" id="RHEA-COMP:14125"/>
        <dbReference type="ChEBI" id="CHEBI:43474"/>
        <dbReference type="ChEBI" id="CHEBI:59918"/>
        <dbReference type="ChEBI" id="CHEBI:64479"/>
        <dbReference type="ChEBI" id="CHEBI:138651"/>
        <dbReference type="EC" id="2.3.1.274"/>
    </reaction>
</comment>
<comment type="pathway">
    <text evidence="1">Lipid metabolism; phospholipid metabolism.</text>
</comment>
<comment type="subunit">
    <text evidence="1">Homodimer. Probably interacts with PlsY.</text>
</comment>
<comment type="subcellular location">
    <subcellularLocation>
        <location evidence="1">Cytoplasm</location>
    </subcellularLocation>
    <text evidence="1">Associated with the membrane possibly through PlsY.</text>
</comment>
<comment type="similarity">
    <text evidence="1">Belongs to the PlsX family.</text>
</comment>
<evidence type="ECO:0000255" key="1">
    <source>
        <dbReference type="HAMAP-Rule" id="MF_00019"/>
    </source>
</evidence>